<protein>
    <recommendedName>
        <fullName>Glycine amidinotransferase, mitochondrial</fullName>
        <ecNumber evidence="2">2.1.4.1</ecNumber>
    </recommendedName>
    <alternativeName>
        <fullName>L-arginine:glycine amidinotransferase</fullName>
    </alternativeName>
    <alternativeName>
        <fullName>Transamidinase</fullName>
    </alternativeName>
</protein>
<reference key="1">
    <citation type="submission" date="2006-02" db="EMBL/GenBank/DDBJ databases">
        <authorList>
            <consortium name="NIH - Mammalian Gene Collection (MGC) project"/>
        </authorList>
    </citation>
    <scope>NUCLEOTIDE SEQUENCE [LARGE SCALE MRNA]</scope>
    <source>
        <strain>Hereford</strain>
        <tissue>Uterus</tissue>
    </source>
</reference>
<comment type="function">
    <text evidence="2">Transamidinase that catalyzes the transfer of the amidino group of L-arginine onto the amino moiety of acceptor metabolites such as glycine, beta-alanine, gamma-aminobutyric acid (GABA) and taurine yielding the corresponding guanidine derivatives. Catalyzes the rate-limiting step of creatine biosynthesis, namely the transfer of the amidino group from L-arginine to glycine to generate guanidinoacetate, which is then methylated by GAMT to form creatine. Provides creatine as a source for ATP generation in tissues with high energy demands, in particular skeletal muscle, heart and brain.</text>
</comment>
<comment type="catalytic activity">
    <reaction evidence="2">
        <text>L-arginine + glycine = guanidinoacetate + L-ornithine</text>
        <dbReference type="Rhea" id="RHEA:13201"/>
        <dbReference type="ChEBI" id="CHEBI:32682"/>
        <dbReference type="ChEBI" id="CHEBI:46911"/>
        <dbReference type="ChEBI" id="CHEBI:57305"/>
        <dbReference type="ChEBI" id="CHEBI:57742"/>
        <dbReference type="EC" id="2.1.4.1"/>
    </reaction>
    <physiologicalReaction direction="left-to-right" evidence="2">
        <dbReference type="Rhea" id="RHEA:13202"/>
    </physiologicalReaction>
</comment>
<comment type="catalytic activity">
    <reaction evidence="2">
        <text>4-aminobutanoate + L-arginine = 4-guanidinobutanoate + L-ornithine</text>
        <dbReference type="Rhea" id="RHEA:75939"/>
        <dbReference type="ChEBI" id="CHEBI:32682"/>
        <dbReference type="ChEBI" id="CHEBI:46911"/>
        <dbReference type="ChEBI" id="CHEBI:57486"/>
        <dbReference type="ChEBI" id="CHEBI:59888"/>
    </reaction>
    <physiologicalReaction direction="left-to-right" evidence="2">
        <dbReference type="Rhea" id="RHEA:75940"/>
    </physiologicalReaction>
</comment>
<comment type="catalytic activity">
    <reaction evidence="2">
        <text>beta-alanine + L-arginine = 3-guanidinopropanoate + L-ornithine</text>
        <dbReference type="Rhea" id="RHEA:75943"/>
        <dbReference type="ChEBI" id="CHEBI:32682"/>
        <dbReference type="ChEBI" id="CHEBI:46911"/>
        <dbReference type="ChEBI" id="CHEBI:57593"/>
        <dbReference type="ChEBI" id="CHEBI:57966"/>
    </reaction>
    <physiologicalReaction direction="left-to-right" evidence="2">
        <dbReference type="Rhea" id="RHEA:75944"/>
    </physiologicalReaction>
</comment>
<comment type="catalytic activity">
    <reaction evidence="2">
        <text>taurine + L-arginine = taurocyamine + L-ornithine</text>
        <dbReference type="Rhea" id="RHEA:75947"/>
        <dbReference type="ChEBI" id="CHEBI:32682"/>
        <dbReference type="ChEBI" id="CHEBI:46911"/>
        <dbReference type="ChEBI" id="CHEBI:58064"/>
        <dbReference type="ChEBI" id="CHEBI:507393"/>
    </reaction>
    <physiologicalReaction direction="left-to-right" evidence="2">
        <dbReference type="Rhea" id="RHEA:75948"/>
    </physiologicalReaction>
</comment>
<comment type="pathway">
    <text evidence="2">Amine and polyamine biosynthesis; creatine biosynthesis; creatine from L-arginine and glycine: step 1/2.</text>
</comment>
<comment type="subunit">
    <text evidence="2">Homodimer.</text>
</comment>
<comment type="subcellular location">
    <subcellularLocation>
        <location evidence="1">Mitochondrion inner membrane</location>
    </subcellularLocation>
</comment>
<comment type="similarity">
    <text evidence="4">Belongs to the amidinotransferase family.</text>
</comment>
<dbReference type="EC" id="2.1.4.1" evidence="2"/>
<dbReference type="EMBL" id="BC113272">
    <property type="protein sequence ID" value="AAI13273.1"/>
    <property type="molecule type" value="mRNA"/>
</dbReference>
<dbReference type="RefSeq" id="NP_001039343.1">
    <property type="nucleotide sequence ID" value="NM_001045878.1"/>
</dbReference>
<dbReference type="SMR" id="Q2HJ74"/>
<dbReference type="FunCoup" id="Q2HJ74">
    <property type="interactions" value="193"/>
</dbReference>
<dbReference type="STRING" id="9913.ENSBTAP00000007338"/>
<dbReference type="PaxDb" id="9913-ENSBTAP00000007338"/>
<dbReference type="PeptideAtlas" id="Q2HJ74"/>
<dbReference type="Ensembl" id="ENSBTAT00000007338.6">
    <property type="protein sequence ID" value="ENSBTAP00000007338.5"/>
    <property type="gene ID" value="ENSBTAG00000005586.6"/>
</dbReference>
<dbReference type="GeneID" id="414732"/>
<dbReference type="KEGG" id="bta:414732"/>
<dbReference type="CTD" id="2628"/>
<dbReference type="VEuPathDB" id="HostDB:ENSBTAG00000005586"/>
<dbReference type="VGNC" id="VGNC:29274">
    <property type="gene designation" value="GATM"/>
</dbReference>
<dbReference type="eggNOG" id="ENOG502QVCA">
    <property type="taxonomic scope" value="Eukaryota"/>
</dbReference>
<dbReference type="GeneTree" id="ENSGT00390000011613"/>
<dbReference type="HOGENOM" id="CLU_047415_1_0_1"/>
<dbReference type="InParanoid" id="Q2HJ74"/>
<dbReference type="OMA" id="YPIHIDA"/>
<dbReference type="OrthoDB" id="10264242at2759"/>
<dbReference type="TreeFam" id="TF300256"/>
<dbReference type="Reactome" id="R-BTA-71288">
    <property type="pathway name" value="Creatine metabolism"/>
</dbReference>
<dbReference type="UniPathway" id="UPA00104">
    <property type="reaction ID" value="UER00579"/>
</dbReference>
<dbReference type="Proteomes" id="UP000009136">
    <property type="component" value="Chromosome 10"/>
</dbReference>
<dbReference type="Bgee" id="ENSBTAG00000005586">
    <property type="expression patterns" value="Expressed in metanephros cortex and 108 other cell types or tissues"/>
</dbReference>
<dbReference type="GO" id="GO:0005743">
    <property type="term" value="C:mitochondrial inner membrane"/>
    <property type="evidence" value="ECO:0007669"/>
    <property type="project" value="UniProtKB-SubCell"/>
</dbReference>
<dbReference type="GO" id="GO:0005758">
    <property type="term" value="C:mitochondrial intermembrane space"/>
    <property type="evidence" value="ECO:0000250"/>
    <property type="project" value="AgBase"/>
</dbReference>
<dbReference type="GO" id="GO:0005739">
    <property type="term" value="C:mitochondrion"/>
    <property type="evidence" value="ECO:0000250"/>
    <property type="project" value="AgBase"/>
</dbReference>
<dbReference type="GO" id="GO:0015067">
    <property type="term" value="F:amidinotransferase activity"/>
    <property type="evidence" value="ECO:0000250"/>
    <property type="project" value="UniProtKB"/>
</dbReference>
<dbReference type="GO" id="GO:0015068">
    <property type="term" value="F:glycine amidinotransferase activity"/>
    <property type="evidence" value="ECO:0000250"/>
    <property type="project" value="AgBase"/>
</dbReference>
<dbReference type="GO" id="GO:0006601">
    <property type="term" value="P:creatine biosynthetic process"/>
    <property type="evidence" value="ECO:0000250"/>
    <property type="project" value="AgBase"/>
</dbReference>
<dbReference type="GO" id="GO:0007611">
    <property type="term" value="P:learning or memory"/>
    <property type="evidence" value="ECO:0007669"/>
    <property type="project" value="Ensembl"/>
</dbReference>
<dbReference type="GO" id="GO:0014889">
    <property type="term" value="P:muscle atrophy"/>
    <property type="evidence" value="ECO:0007669"/>
    <property type="project" value="Ensembl"/>
</dbReference>
<dbReference type="GO" id="GO:0120162">
    <property type="term" value="P:positive regulation of cold-induced thermogenesis"/>
    <property type="evidence" value="ECO:0007669"/>
    <property type="project" value="Ensembl"/>
</dbReference>
<dbReference type="CDD" id="cd21136">
    <property type="entry name" value="amidinotransferase_AGAT-like"/>
    <property type="match status" value="1"/>
</dbReference>
<dbReference type="FunFam" id="3.75.10.10:FF:000005">
    <property type="entry name" value="Glycine amidinotransferase, mitochondrial"/>
    <property type="match status" value="1"/>
</dbReference>
<dbReference type="Gene3D" id="3.75.10.10">
    <property type="entry name" value="L-arginine/glycine Amidinotransferase, Chain A"/>
    <property type="match status" value="1"/>
</dbReference>
<dbReference type="InterPro" id="IPR033195">
    <property type="entry name" value="AmidinoTrfase"/>
</dbReference>
<dbReference type="PANTHER" id="PTHR10488">
    <property type="entry name" value="GLYCINE AMIDINOTRANSFERASE, MITOCHONDRIAL"/>
    <property type="match status" value="1"/>
</dbReference>
<dbReference type="PANTHER" id="PTHR10488:SF1">
    <property type="entry name" value="GLYCINE AMIDINOTRANSFERASE, MITOCHONDRIAL"/>
    <property type="match status" value="1"/>
</dbReference>
<dbReference type="SUPFAM" id="SSF55909">
    <property type="entry name" value="Pentein"/>
    <property type="match status" value="1"/>
</dbReference>
<organism>
    <name type="scientific">Bos taurus</name>
    <name type="common">Bovine</name>
    <dbReference type="NCBI Taxonomy" id="9913"/>
    <lineage>
        <taxon>Eukaryota</taxon>
        <taxon>Metazoa</taxon>
        <taxon>Chordata</taxon>
        <taxon>Craniata</taxon>
        <taxon>Vertebrata</taxon>
        <taxon>Euteleostomi</taxon>
        <taxon>Mammalia</taxon>
        <taxon>Eutheria</taxon>
        <taxon>Laurasiatheria</taxon>
        <taxon>Artiodactyla</taxon>
        <taxon>Ruminantia</taxon>
        <taxon>Pecora</taxon>
        <taxon>Bovidae</taxon>
        <taxon>Bovinae</taxon>
        <taxon>Bos</taxon>
    </lineage>
</organism>
<accession>Q2HJ74</accession>
<proteinExistence type="evidence at transcript level"/>
<gene>
    <name type="primary">GATM</name>
</gene>
<feature type="transit peptide" description="Mitochondrion" evidence="3">
    <location>
        <begin position="1"/>
        <end position="43"/>
    </location>
</feature>
<feature type="chain" id="PRO_0000286940" description="Glycine amidinotransferase, mitochondrial">
    <location>
        <begin position="44"/>
        <end position="423"/>
    </location>
</feature>
<feature type="active site" evidence="2">
    <location>
        <position position="254"/>
    </location>
</feature>
<feature type="active site" evidence="2">
    <location>
        <position position="303"/>
    </location>
</feature>
<feature type="active site" description="Amidino-cysteine intermediate" evidence="2">
    <location>
        <position position="407"/>
    </location>
</feature>
<feature type="binding site" evidence="2">
    <location>
        <position position="170"/>
    </location>
    <ligand>
        <name>arginine</name>
        <dbReference type="ChEBI" id="CHEBI:32696"/>
    </ligand>
</feature>
<feature type="binding site" evidence="2">
    <location>
        <position position="305"/>
    </location>
    <ligand>
        <name>arginine</name>
        <dbReference type="ChEBI" id="CHEBI:32696"/>
    </ligand>
</feature>
<feature type="binding site" evidence="2">
    <location>
        <position position="322"/>
    </location>
    <ligand>
        <name>arginine</name>
        <dbReference type="ChEBI" id="CHEBI:32696"/>
    </ligand>
</feature>
<feature type="binding site" evidence="2">
    <location>
        <position position="354"/>
    </location>
    <ligand>
        <name>arginine</name>
        <dbReference type="ChEBI" id="CHEBI:32696"/>
    </ligand>
</feature>
<feature type="binding site" evidence="2">
    <location>
        <position position="355"/>
    </location>
    <ligand>
        <name>arginine</name>
        <dbReference type="ChEBI" id="CHEBI:32696"/>
    </ligand>
</feature>
<feature type="modified residue" description="Phosphoserine" evidence="2">
    <location>
        <position position="46"/>
    </location>
</feature>
<feature type="modified residue" description="Phosphoserine" evidence="2">
    <location>
        <position position="49"/>
    </location>
</feature>
<feature type="modified residue" description="N6-acetyllysine" evidence="2">
    <location>
        <position position="385"/>
    </location>
</feature>
<name>GATM_BOVIN</name>
<evidence type="ECO:0000250" key="1"/>
<evidence type="ECO:0000250" key="2">
    <source>
        <dbReference type="UniProtKB" id="P50440"/>
    </source>
</evidence>
<evidence type="ECO:0000255" key="3"/>
<evidence type="ECO:0000305" key="4"/>
<sequence>MLRVRCLRGGSRGAEALHYIGSRLGRTVTGWVQRTFQSTQAATASSRNSCAADDKATDPLPKDCPVSSFNEWDPLEEVIVGRAENACVPPFTVEVKANTYDKHWPFYQKYGGSYFPKDHLQKAVAEIEEMCNILKMEGVTVRRPDPIDWSLKYKTPDFESTGLYGAMPRDILIVVGNEIIEAPMAWRARFFEYRAYRTIIKDYFRRGAKWTTAPKPTMADELYDQDYPIHSVEDRHKLAAQGKFVTTEFEPCFDAADFIRAGRDIFVQRSQVTNYMGIEWMRKHLAPDYRVHIVSFKDPNPMHIDATFNIIGPGLVLSNPDRPCHQIDLFKKAGWTIVTPPTPIIPDDHPLWMSSKWLSMNVLMLDEKRVMVDANEVPIQKMFEKLGISTIKVSIRNANSLGGGFHCWTCDVRRRGTLQSYFD</sequence>
<keyword id="KW-0007">Acetylation</keyword>
<keyword id="KW-0472">Membrane</keyword>
<keyword id="KW-0496">Mitochondrion</keyword>
<keyword id="KW-0999">Mitochondrion inner membrane</keyword>
<keyword id="KW-0597">Phosphoprotein</keyword>
<keyword id="KW-1185">Reference proteome</keyword>
<keyword id="KW-0808">Transferase</keyword>
<keyword id="KW-0809">Transit peptide</keyword>